<name>CSRA_SHESH</name>
<organism>
    <name type="scientific">Shewanella sediminis (strain HAW-EB3)</name>
    <dbReference type="NCBI Taxonomy" id="425104"/>
    <lineage>
        <taxon>Bacteria</taxon>
        <taxon>Pseudomonadati</taxon>
        <taxon>Pseudomonadota</taxon>
        <taxon>Gammaproteobacteria</taxon>
        <taxon>Alteromonadales</taxon>
        <taxon>Shewanellaceae</taxon>
        <taxon>Shewanella</taxon>
    </lineage>
</organism>
<keyword id="KW-0010">Activator</keyword>
<keyword id="KW-0963">Cytoplasm</keyword>
<keyword id="KW-1185">Reference proteome</keyword>
<keyword id="KW-0678">Repressor</keyword>
<keyword id="KW-0694">RNA-binding</keyword>
<keyword id="KW-0810">Translation regulation</keyword>
<accession>A8FSV7</accession>
<evidence type="ECO:0000255" key="1">
    <source>
        <dbReference type="HAMAP-Rule" id="MF_00167"/>
    </source>
</evidence>
<sequence>MLILTRRVGETLMIGDEVTVTVLGVKGNQVRIGVNAPKEVSVHREEIYQRIQSEKAGNPSEGGNF</sequence>
<reference key="1">
    <citation type="submission" date="2007-08" db="EMBL/GenBank/DDBJ databases">
        <title>Complete sequence of Shewanella sediminis HAW-EB3.</title>
        <authorList>
            <consortium name="US DOE Joint Genome Institute"/>
            <person name="Copeland A."/>
            <person name="Lucas S."/>
            <person name="Lapidus A."/>
            <person name="Barry K."/>
            <person name="Glavina del Rio T."/>
            <person name="Dalin E."/>
            <person name="Tice H."/>
            <person name="Pitluck S."/>
            <person name="Chertkov O."/>
            <person name="Brettin T."/>
            <person name="Bruce D."/>
            <person name="Detter J.C."/>
            <person name="Han C."/>
            <person name="Schmutz J."/>
            <person name="Larimer F."/>
            <person name="Land M."/>
            <person name="Hauser L."/>
            <person name="Kyrpides N."/>
            <person name="Kim E."/>
            <person name="Zhao J.-S."/>
            <person name="Richardson P."/>
        </authorList>
    </citation>
    <scope>NUCLEOTIDE SEQUENCE [LARGE SCALE GENOMIC DNA]</scope>
    <source>
        <strain>HAW-EB3</strain>
    </source>
</reference>
<comment type="function">
    <text evidence="1">A key translational regulator that binds mRNA to regulate translation initiation and/or mRNA stability. Mediates global changes in gene expression, shifting from rapid growth to stress survival by linking envelope stress, the stringent response and the catabolite repression systems. Usually binds in the 5'-UTR; binding at or near the Shine-Dalgarno sequence prevents ribosome-binding, repressing translation, binding elsewhere in the 5'-UTR can activate translation and/or stabilize the mRNA. Its function is antagonized by small RNA(s).</text>
</comment>
<comment type="subunit">
    <text evidence="1">Homodimer; the beta-strands of each monomer intercalate to form a hydrophobic core, while the alpha-helices form wings that extend away from the core.</text>
</comment>
<comment type="subcellular location">
    <subcellularLocation>
        <location evidence="1">Cytoplasm</location>
    </subcellularLocation>
</comment>
<comment type="similarity">
    <text evidence="1">Belongs to the CsrA/RsmA family.</text>
</comment>
<protein>
    <recommendedName>
        <fullName evidence="1">Translational regulator CsrA</fullName>
    </recommendedName>
    <alternativeName>
        <fullName evidence="1">Carbon storage regulator</fullName>
    </alternativeName>
</protein>
<feature type="chain" id="PRO_1000076999" description="Translational regulator CsrA">
    <location>
        <begin position="1"/>
        <end position="65"/>
    </location>
</feature>
<dbReference type="EMBL" id="CP000821">
    <property type="protein sequence ID" value="ABV35930.1"/>
    <property type="molecule type" value="Genomic_DNA"/>
</dbReference>
<dbReference type="RefSeq" id="WP_012141666.1">
    <property type="nucleotide sequence ID" value="NC_009831.1"/>
</dbReference>
<dbReference type="SMR" id="A8FSV7"/>
<dbReference type="STRING" id="425104.Ssed_1319"/>
<dbReference type="KEGG" id="sse:Ssed_1319"/>
<dbReference type="eggNOG" id="COG1551">
    <property type="taxonomic scope" value="Bacteria"/>
</dbReference>
<dbReference type="HOGENOM" id="CLU_164837_2_2_6"/>
<dbReference type="OrthoDB" id="9809061at2"/>
<dbReference type="Proteomes" id="UP000002015">
    <property type="component" value="Chromosome"/>
</dbReference>
<dbReference type="GO" id="GO:0005829">
    <property type="term" value="C:cytosol"/>
    <property type="evidence" value="ECO:0007669"/>
    <property type="project" value="TreeGrafter"/>
</dbReference>
<dbReference type="GO" id="GO:0048027">
    <property type="term" value="F:mRNA 5'-UTR binding"/>
    <property type="evidence" value="ECO:0007669"/>
    <property type="project" value="UniProtKB-UniRule"/>
</dbReference>
<dbReference type="GO" id="GO:0006402">
    <property type="term" value="P:mRNA catabolic process"/>
    <property type="evidence" value="ECO:0007669"/>
    <property type="project" value="InterPro"/>
</dbReference>
<dbReference type="GO" id="GO:0045947">
    <property type="term" value="P:negative regulation of translational initiation"/>
    <property type="evidence" value="ECO:0007669"/>
    <property type="project" value="UniProtKB-UniRule"/>
</dbReference>
<dbReference type="GO" id="GO:0045948">
    <property type="term" value="P:positive regulation of translational initiation"/>
    <property type="evidence" value="ECO:0007669"/>
    <property type="project" value="UniProtKB-UniRule"/>
</dbReference>
<dbReference type="GO" id="GO:0006109">
    <property type="term" value="P:regulation of carbohydrate metabolic process"/>
    <property type="evidence" value="ECO:0007669"/>
    <property type="project" value="UniProtKB-UniRule"/>
</dbReference>
<dbReference type="FunFam" id="2.60.40.4380:FF:000001">
    <property type="entry name" value="Translational regulator CsrA"/>
    <property type="match status" value="1"/>
</dbReference>
<dbReference type="Gene3D" id="2.60.40.4380">
    <property type="entry name" value="Translational regulator CsrA"/>
    <property type="match status" value="1"/>
</dbReference>
<dbReference type="HAMAP" id="MF_00167">
    <property type="entry name" value="CsrA"/>
    <property type="match status" value="1"/>
</dbReference>
<dbReference type="InterPro" id="IPR003751">
    <property type="entry name" value="CsrA"/>
</dbReference>
<dbReference type="InterPro" id="IPR036107">
    <property type="entry name" value="CsrA_sf"/>
</dbReference>
<dbReference type="NCBIfam" id="TIGR00202">
    <property type="entry name" value="csrA"/>
    <property type="match status" value="1"/>
</dbReference>
<dbReference type="NCBIfam" id="NF002469">
    <property type="entry name" value="PRK01712.1"/>
    <property type="match status" value="1"/>
</dbReference>
<dbReference type="PANTHER" id="PTHR34984">
    <property type="entry name" value="CARBON STORAGE REGULATOR"/>
    <property type="match status" value="1"/>
</dbReference>
<dbReference type="PANTHER" id="PTHR34984:SF1">
    <property type="entry name" value="CARBON STORAGE REGULATOR"/>
    <property type="match status" value="1"/>
</dbReference>
<dbReference type="Pfam" id="PF02599">
    <property type="entry name" value="CsrA"/>
    <property type="match status" value="1"/>
</dbReference>
<dbReference type="SUPFAM" id="SSF117130">
    <property type="entry name" value="CsrA-like"/>
    <property type="match status" value="1"/>
</dbReference>
<proteinExistence type="inferred from homology"/>
<gene>
    <name evidence="1" type="primary">csrA</name>
    <name type="ordered locus">Ssed_1319</name>
</gene>